<organism>
    <name type="scientific">Arabidopsis thaliana</name>
    <name type="common">Mouse-ear cress</name>
    <dbReference type="NCBI Taxonomy" id="3702"/>
    <lineage>
        <taxon>Eukaryota</taxon>
        <taxon>Viridiplantae</taxon>
        <taxon>Streptophyta</taxon>
        <taxon>Embryophyta</taxon>
        <taxon>Tracheophyta</taxon>
        <taxon>Spermatophyta</taxon>
        <taxon>Magnoliopsida</taxon>
        <taxon>eudicotyledons</taxon>
        <taxon>Gunneridae</taxon>
        <taxon>Pentapetalae</taxon>
        <taxon>rosids</taxon>
        <taxon>malvids</taxon>
        <taxon>Brassicales</taxon>
        <taxon>Brassicaceae</taxon>
        <taxon>Camelineae</taxon>
        <taxon>Arabidopsis</taxon>
    </lineage>
</organism>
<feature type="chain" id="PRO_0000209138" description="Monodehydroascorbate reductase 1, peroxisomal">
    <location>
        <begin position="1"/>
        <end position="434"/>
    </location>
</feature>
<feature type="binding site" evidence="1">
    <location>
        <begin position="13"/>
        <end position="16"/>
    </location>
    <ligand>
        <name>FAD</name>
        <dbReference type="ChEBI" id="CHEBI:57692"/>
    </ligand>
</feature>
<feature type="binding site" evidence="1">
    <location>
        <position position="40"/>
    </location>
    <ligand>
        <name>FAD</name>
        <dbReference type="ChEBI" id="CHEBI:57692"/>
    </ligand>
</feature>
<feature type="binding site" evidence="1">
    <location>
        <position position="47"/>
    </location>
    <ligand>
        <name>FAD</name>
        <dbReference type="ChEBI" id="CHEBI:57692"/>
    </ligand>
</feature>
<feature type="binding site" evidence="1">
    <location>
        <position position="52"/>
    </location>
    <ligand>
        <name>FAD</name>
        <dbReference type="ChEBI" id="CHEBI:57692"/>
    </ligand>
</feature>
<feature type="binding site" evidence="1">
    <location>
        <position position="95"/>
    </location>
    <ligand>
        <name>FAD</name>
        <dbReference type="ChEBI" id="CHEBI:57692"/>
    </ligand>
</feature>
<feature type="binding site" evidence="1">
    <location>
        <begin position="146"/>
        <end position="147"/>
    </location>
    <ligand>
        <name>FAD</name>
        <dbReference type="ChEBI" id="CHEBI:57692"/>
    </ligand>
</feature>
<feature type="binding site" evidence="1">
    <location>
        <begin position="171"/>
        <end position="177"/>
    </location>
    <ligand>
        <name>NAD(+)</name>
        <dbReference type="ChEBI" id="CHEBI:57540"/>
    </ligand>
</feature>
<feature type="binding site" evidence="1">
    <location>
        <begin position="173"/>
        <end position="177"/>
    </location>
    <ligand>
        <name>NADP(+)</name>
        <dbReference type="ChEBI" id="CHEBI:58349"/>
    </ligand>
</feature>
<feature type="binding site" evidence="1">
    <location>
        <position position="195"/>
    </location>
    <ligand>
        <name>NAD(+)</name>
        <dbReference type="ChEBI" id="CHEBI:57540"/>
    </ligand>
</feature>
<feature type="binding site" evidence="1">
    <location>
        <position position="201"/>
    </location>
    <ligand>
        <name>NAD(+)</name>
        <dbReference type="ChEBI" id="CHEBI:57540"/>
    </ligand>
</feature>
<feature type="binding site" evidence="1">
    <location>
        <position position="201"/>
    </location>
    <ligand>
        <name>NADP(+)</name>
        <dbReference type="ChEBI" id="CHEBI:58349"/>
    </ligand>
</feature>
<feature type="binding site" evidence="1">
    <location>
        <position position="260"/>
    </location>
    <ligand>
        <name>NAD(+)</name>
        <dbReference type="ChEBI" id="CHEBI:57540"/>
    </ligand>
</feature>
<feature type="binding site" evidence="1">
    <location>
        <position position="260"/>
    </location>
    <ligand>
        <name>NADP(+)</name>
        <dbReference type="ChEBI" id="CHEBI:58349"/>
    </ligand>
</feature>
<feature type="binding site" evidence="1">
    <location>
        <position position="297"/>
    </location>
    <ligand>
        <name>FAD</name>
        <dbReference type="ChEBI" id="CHEBI:57692"/>
    </ligand>
</feature>
<feature type="binding site" evidence="1">
    <location>
        <begin position="313"/>
        <end position="314"/>
    </location>
    <ligand>
        <name>NAD(+)</name>
        <dbReference type="ChEBI" id="CHEBI:57540"/>
    </ligand>
</feature>
<feature type="binding site" evidence="1">
    <location>
        <begin position="313"/>
        <end position="314"/>
    </location>
    <ligand>
        <name>NADP(+)</name>
        <dbReference type="ChEBI" id="CHEBI:58349"/>
    </ligand>
</feature>
<feature type="binding site" evidence="1">
    <location>
        <position position="315"/>
    </location>
    <ligand>
        <name>FAD</name>
        <dbReference type="ChEBI" id="CHEBI:57692"/>
    </ligand>
</feature>
<feature type="binding site" evidence="1">
    <location>
        <position position="319"/>
    </location>
    <ligand>
        <name>L-ascorbate</name>
        <dbReference type="ChEBI" id="CHEBI:38290"/>
    </ligand>
</feature>
<feature type="binding site" evidence="1">
    <location>
        <position position="348"/>
    </location>
    <ligand>
        <name>FAD</name>
        <dbReference type="ChEBI" id="CHEBI:57692"/>
    </ligand>
</feature>
<feature type="binding site" evidence="1">
    <location>
        <position position="348"/>
    </location>
    <ligand>
        <name>NAD(+)</name>
        <dbReference type="ChEBI" id="CHEBI:57540"/>
    </ligand>
</feature>
<feature type="binding site" evidence="1">
    <location>
        <position position="348"/>
    </location>
    <ligand>
        <name>NADP(+)</name>
        <dbReference type="ChEBI" id="CHEBI:58349"/>
    </ligand>
</feature>
<feature type="binding site" evidence="1">
    <location>
        <position position="350"/>
    </location>
    <ligand>
        <name>L-ascorbate</name>
        <dbReference type="ChEBI" id="CHEBI:38290"/>
    </ligand>
</feature>
<feature type="modified residue" description="Phosphoserine" evidence="9">
    <location>
        <position position="416"/>
    </location>
</feature>
<feature type="mutagenesis site" description="Loss of peroxisomal targeting." evidence="3">
    <location>
        <begin position="432"/>
        <end position="434"/>
    </location>
</feature>
<feature type="sequence conflict" description="In Ref. 4; AAM64531." evidence="6" ref="4">
    <original>D</original>
    <variation>N</variation>
    <location>
        <position position="206"/>
    </location>
</feature>
<accession>Q9LFA3</accession>
<accession>Q0WUV6</accession>
<accession>Q8LBV9</accession>
<keyword id="KW-0025">Alternative splicing</keyword>
<keyword id="KW-0274">FAD</keyword>
<keyword id="KW-0285">Flavoprotein</keyword>
<keyword id="KW-0520">NAD</keyword>
<keyword id="KW-0521">NADP</keyword>
<keyword id="KW-0560">Oxidoreductase</keyword>
<keyword id="KW-0576">Peroxisome</keyword>
<keyword id="KW-0597">Phosphoprotein</keyword>
<keyword id="KW-0676">Redox-active center</keyword>
<keyword id="KW-1185">Reference proteome</keyword>
<evidence type="ECO:0000250" key="1">
    <source>
        <dbReference type="UniProtKB" id="Q652L6"/>
    </source>
</evidence>
<evidence type="ECO:0000250" key="2">
    <source>
        <dbReference type="UniProtKB" id="Q9S926"/>
    </source>
</evidence>
<evidence type="ECO:0000269" key="3">
    <source>
    </source>
</evidence>
<evidence type="ECO:0000269" key="4">
    <source>
    </source>
</evidence>
<evidence type="ECO:0000303" key="5">
    <source>
    </source>
</evidence>
<evidence type="ECO:0000305" key="6"/>
<evidence type="ECO:0000312" key="7">
    <source>
        <dbReference type="Araport" id="AT3G52880"/>
    </source>
</evidence>
<evidence type="ECO:0000312" key="8">
    <source>
        <dbReference type="EMBL" id="CAB86892.1"/>
    </source>
</evidence>
<evidence type="ECO:0007744" key="9">
    <source>
    </source>
</evidence>
<proteinExistence type="evidence at protein level"/>
<protein>
    <recommendedName>
        <fullName evidence="5">Monodehydroascorbate reductase 1, peroxisomal</fullName>
        <shortName evidence="5">AtMDAR1</shortName>
        <ecNumber evidence="6">1.6.5.4</ecNumber>
    </recommendedName>
</protein>
<reference key="1">
    <citation type="journal article" date="2000" name="Nature">
        <title>Sequence and analysis of chromosome 3 of the plant Arabidopsis thaliana.</title>
        <authorList>
            <person name="Salanoubat M."/>
            <person name="Lemcke K."/>
            <person name="Rieger M."/>
            <person name="Ansorge W."/>
            <person name="Unseld M."/>
            <person name="Fartmann B."/>
            <person name="Valle G."/>
            <person name="Bloecker H."/>
            <person name="Perez-Alonso M."/>
            <person name="Obermaier B."/>
            <person name="Delseny M."/>
            <person name="Boutry M."/>
            <person name="Grivell L.A."/>
            <person name="Mache R."/>
            <person name="Puigdomenech P."/>
            <person name="De Simone V."/>
            <person name="Choisne N."/>
            <person name="Artiguenave F."/>
            <person name="Robert C."/>
            <person name="Brottier P."/>
            <person name="Wincker P."/>
            <person name="Cattolico L."/>
            <person name="Weissenbach J."/>
            <person name="Saurin W."/>
            <person name="Quetier F."/>
            <person name="Schaefer M."/>
            <person name="Mueller-Auer S."/>
            <person name="Gabel C."/>
            <person name="Fuchs M."/>
            <person name="Benes V."/>
            <person name="Wurmbach E."/>
            <person name="Drzonek H."/>
            <person name="Erfle H."/>
            <person name="Jordan N."/>
            <person name="Bangert S."/>
            <person name="Wiedelmann R."/>
            <person name="Kranz H."/>
            <person name="Voss H."/>
            <person name="Holland R."/>
            <person name="Brandt P."/>
            <person name="Nyakatura G."/>
            <person name="Vezzi A."/>
            <person name="D'Angelo M."/>
            <person name="Pallavicini A."/>
            <person name="Toppo S."/>
            <person name="Simionati B."/>
            <person name="Conrad A."/>
            <person name="Hornischer K."/>
            <person name="Kauer G."/>
            <person name="Loehnert T.-H."/>
            <person name="Nordsiek G."/>
            <person name="Reichelt J."/>
            <person name="Scharfe M."/>
            <person name="Schoen O."/>
            <person name="Bargues M."/>
            <person name="Terol J."/>
            <person name="Climent J."/>
            <person name="Navarro P."/>
            <person name="Collado C."/>
            <person name="Perez-Perez A."/>
            <person name="Ottenwaelder B."/>
            <person name="Duchemin D."/>
            <person name="Cooke R."/>
            <person name="Laudie M."/>
            <person name="Berger-Llauro C."/>
            <person name="Purnelle B."/>
            <person name="Masuy D."/>
            <person name="de Haan M."/>
            <person name="Maarse A.C."/>
            <person name="Alcaraz J.-P."/>
            <person name="Cottet A."/>
            <person name="Casacuberta E."/>
            <person name="Monfort A."/>
            <person name="Argiriou A."/>
            <person name="Flores M."/>
            <person name="Liguori R."/>
            <person name="Vitale D."/>
            <person name="Mannhaupt G."/>
            <person name="Haase D."/>
            <person name="Schoof H."/>
            <person name="Rudd S."/>
            <person name="Zaccaria P."/>
            <person name="Mewes H.-W."/>
            <person name="Mayer K.F.X."/>
            <person name="Kaul S."/>
            <person name="Town C.D."/>
            <person name="Koo H.L."/>
            <person name="Tallon L.J."/>
            <person name="Jenkins J."/>
            <person name="Rooney T."/>
            <person name="Rizzo M."/>
            <person name="Walts A."/>
            <person name="Utterback T."/>
            <person name="Fujii C.Y."/>
            <person name="Shea T.P."/>
            <person name="Creasy T.H."/>
            <person name="Haas B."/>
            <person name="Maiti R."/>
            <person name="Wu D."/>
            <person name="Peterson J."/>
            <person name="Van Aken S."/>
            <person name="Pai G."/>
            <person name="Militscher J."/>
            <person name="Sellers P."/>
            <person name="Gill J.E."/>
            <person name="Feldblyum T.V."/>
            <person name="Preuss D."/>
            <person name="Lin X."/>
            <person name="Nierman W.C."/>
            <person name="Salzberg S.L."/>
            <person name="White O."/>
            <person name="Venter J.C."/>
            <person name="Fraser C.M."/>
            <person name="Kaneko T."/>
            <person name="Nakamura Y."/>
            <person name="Sato S."/>
            <person name="Kato T."/>
            <person name="Asamizu E."/>
            <person name="Sasamoto S."/>
            <person name="Kimura T."/>
            <person name="Idesawa K."/>
            <person name="Kawashima K."/>
            <person name="Kishida Y."/>
            <person name="Kiyokawa C."/>
            <person name="Kohara M."/>
            <person name="Matsumoto M."/>
            <person name="Matsuno A."/>
            <person name="Muraki A."/>
            <person name="Nakayama S."/>
            <person name="Nakazaki N."/>
            <person name="Shinpo S."/>
            <person name="Takeuchi C."/>
            <person name="Wada T."/>
            <person name="Watanabe A."/>
            <person name="Yamada M."/>
            <person name="Yasuda M."/>
            <person name="Tabata S."/>
        </authorList>
    </citation>
    <scope>NUCLEOTIDE SEQUENCE [LARGE SCALE GENOMIC DNA]</scope>
    <source>
        <strain>cv. Columbia</strain>
    </source>
</reference>
<reference key="2">
    <citation type="journal article" date="2017" name="Plant J.">
        <title>Araport11: a complete reannotation of the Arabidopsis thaliana reference genome.</title>
        <authorList>
            <person name="Cheng C.Y."/>
            <person name="Krishnakumar V."/>
            <person name="Chan A.P."/>
            <person name="Thibaud-Nissen F."/>
            <person name="Schobel S."/>
            <person name="Town C.D."/>
        </authorList>
    </citation>
    <scope>GENOME REANNOTATION</scope>
    <source>
        <strain>cv. Columbia</strain>
    </source>
</reference>
<reference key="3">
    <citation type="journal article" date="2003" name="Science">
        <title>Empirical analysis of transcriptional activity in the Arabidopsis genome.</title>
        <authorList>
            <person name="Yamada K."/>
            <person name="Lim J."/>
            <person name="Dale J.M."/>
            <person name="Chen H."/>
            <person name="Shinn P."/>
            <person name="Palm C.J."/>
            <person name="Southwick A.M."/>
            <person name="Wu H.C."/>
            <person name="Kim C.J."/>
            <person name="Nguyen M."/>
            <person name="Pham P.K."/>
            <person name="Cheuk R.F."/>
            <person name="Karlin-Newmann G."/>
            <person name="Liu S.X."/>
            <person name="Lam B."/>
            <person name="Sakano H."/>
            <person name="Wu T."/>
            <person name="Yu G."/>
            <person name="Miranda M."/>
            <person name="Quach H.L."/>
            <person name="Tripp M."/>
            <person name="Chang C.H."/>
            <person name="Lee J.M."/>
            <person name="Toriumi M.J."/>
            <person name="Chan M.M."/>
            <person name="Tang C.C."/>
            <person name="Onodera C.S."/>
            <person name="Deng J.M."/>
            <person name="Akiyama K."/>
            <person name="Ansari Y."/>
            <person name="Arakawa T."/>
            <person name="Banh J."/>
            <person name="Banno F."/>
            <person name="Bowser L."/>
            <person name="Brooks S.Y."/>
            <person name="Carninci P."/>
            <person name="Chao Q."/>
            <person name="Choy N."/>
            <person name="Enju A."/>
            <person name="Goldsmith A.D."/>
            <person name="Gurjal M."/>
            <person name="Hansen N.F."/>
            <person name="Hayashizaki Y."/>
            <person name="Johnson-Hopson C."/>
            <person name="Hsuan V.W."/>
            <person name="Iida K."/>
            <person name="Karnes M."/>
            <person name="Khan S."/>
            <person name="Koesema E."/>
            <person name="Ishida J."/>
            <person name="Jiang P.X."/>
            <person name="Jones T."/>
            <person name="Kawai J."/>
            <person name="Kamiya A."/>
            <person name="Meyers C."/>
            <person name="Nakajima M."/>
            <person name="Narusaka M."/>
            <person name="Seki M."/>
            <person name="Sakurai T."/>
            <person name="Satou M."/>
            <person name="Tamse R."/>
            <person name="Vaysberg M."/>
            <person name="Wallender E.K."/>
            <person name="Wong C."/>
            <person name="Yamamura Y."/>
            <person name="Yuan S."/>
            <person name="Shinozaki K."/>
            <person name="Davis R.W."/>
            <person name="Theologis A."/>
            <person name="Ecker J.R."/>
        </authorList>
    </citation>
    <scope>NUCLEOTIDE SEQUENCE [LARGE SCALE MRNA]</scope>
    <source>
        <strain>cv. Columbia</strain>
    </source>
</reference>
<reference key="4">
    <citation type="submission" date="2002-03" db="EMBL/GenBank/DDBJ databases">
        <title>Full-length cDNA from Arabidopsis thaliana.</title>
        <authorList>
            <person name="Brover V.V."/>
            <person name="Troukhan M.E."/>
            <person name="Alexandrov N.A."/>
            <person name="Lu Y.-P."/>
            <person name="Flavell R.B."/>
            <person name="Feldmann K.A."/>
        </authorList>
    </citation>
    <scope>NUCLEOTIDE SEQUENCE [LARGE SCALE MRNA]</scope>
</reference>
<reference key="5">
    <citation type="submission" date="2006-07" db="EMBL/GenBank/DDBJ databases">
        <title>Large-scale analysis of RIKEN Arabidopsis full-length (RAFL) cDNAs.</title>
        <authorList>
            <person name="Totoki Y."/>
            <person name="Seki M."/>
            <person name="Ishida J."/>
            <person name="Nakajima M."/>
            <person name="Enju A."/>
            <person name="Kamiya A."/>
            <person name="Narusaka M."/>
            <person name="Shin-i T."/>
            <person name="Nakagawa M."/>
            <person name="Sakamoto N."/>
            <person name="Oishi K."/>
            <person name="Kohara Y."/>
            <person name="Kobayashi M."/>
            <person name="Toyoda A."/>
            <person name="Sakaki Y."/>
            <person name="Sakurai T."/>
            <person name="Iida K."/>
            <person name="Akiyama K."/>
            <person name="Satou M."/>
            <person name="Toyoda T."/>
            <person name="Konagaya A."/>
            <person name="Carninci P."/>
            <person name="Kawai J."/>
            <person name="Hayashizaki Y."/>
            <person name="Shinozaki K."/>
        </authorList>
    </citation>
    <scope>NUCLEOTIDE SEQUENCE [LARGE SCALE MRNA]</scope>
    <source>
        <strain>cv. Columbia</strain>
    </source>
</reference>
<reference key="6">
    <citation type="journal article" date="2009" name="DNA Res.">
        <title>Analysis of multiple occurrences of alternative splicing events in Arabidopsis thaliana using novel sequenced full-length cDNAs.</title>
        <authorList>
            <person name="Iida K."/>
            <person name="Fukami-Kobayashi K."/>
            <person name="Toyoda A."/>
            <person name="Sakaki Y."/>
            <person name="Kobayashi M."/>
            <person name="Seki M."/>
            <person name="Shinozaki K."/>
        </authorList>
    </citation>
    <scope>NUCLEOTIDE SEQUENCE [LARGE SCALE MRNA]</scope>
    <source>
        <strain>cv. Columbia</strain>
    </source>
</reference>
<reference key="7">
    <citation type="journal article" date="2005" name="Plant J.">
        <title>Arabidopsis peroxisomes possess functionally redundant membrane and matrix isoforms of monodehydroascorbate reductase.</title>
        <authorList>
            <person name="Lisenbee C.S."/>
            <person name="Lingard M.J."/>
            <person name="Trelease R.N."/>
        </authorList>
    </citation>
    <scope>FUNCTION</scope>
    <scope>GENE FAMILY</scope>
    <scope>NOMENCLATURE</scope>
    <scope>SUBCELLULAR LOCATION</scope>
    <scope>MUTAGENESIS OF 432-ALA--ILE-434</scope>
</reference>
<reference key="8">
    <citation type="journal article" date="2006" name="Proteomics">
        <title>The early responses of Arabidopsis thaliana cells to cadmium exposure explored by protein and metabolite profiling analyses.</title>
        <authorList>
            <person name="Sarry J.-E."/>
            <person name="Kuhn L."/>
            <person name="Ducruix C."/>
            <person name="Lafaye A."/>
            <person name="Junot C."/>
            <person name="Hugouvieux V."/>
            <person name="Jourdain A."/>
            <person name="Bastien O."/>
            <person name="Fievet J.B."/>
            <person name="Vailhen D."/>
            <person name="Amekraz B."/>
            <person name="Moulin C."/>
            <person name="Ezan E."/>
            <person name="Garin J."/>
            <person name="Bourguignon J."/>
        </authorList>
    </citation>
    <scope>INDUCTION BY CADMIUM</scope>
    <source>
        <strain>cv. Columbia</strain>
    </source>
</reference>
<reference key="9">
    <citation type="journal article" date="2007" name="Mol. Cell. Proteomics">
        <title>Multidimensional protein identification technology (MudPIT) analysis of ubiquitinated proteins in plants.</title>
        <authorList>
            <person name="Maor R."/>
            <person name="Jones A."/>
            <person name="Nuehse T.S."/>
            <person name="Studholme D.J."/>
            <person name="Peck S.C."/>
            <person name="Shirasu K."/>
        </authorList>
    </citation>
    <scope>IDENTIFICATION BY MASS SPECTROMETRY [LARGE SCALE ANALYSIS]</scope>
    <source>
        <strain>cv. Landsberg erecta</strain>
    </source>
</reference>
<reference key="10">
    <citation type="journal article" date="2009" name="Plant Physiol.">
        <title>Large-scale Arabidopsis phosphoproteome profiling reveals novel chloroplast kinase substrates and phosphorylation networks.</title>
        <authorList>
            <person name="Reiland S."/>
            <person name="Messerli G."/>
            <person name="Baerenfaller K."/>
            <person name="Gerrits B."/>
            <person name="Endler A."/>
            <person name="Grossmann J."/>
            <person name="Gruissem W."/>
            <person name="Baginsky S."/>
        </authorList>
    </citation>
    <scope>PHOSPHORYLATION [LARGE SCALE ANALYSIS] AT SER-416</scope>
    <scope>IDENTIFICATION BY MASS SPECTROMETRY [LARGE SCALE ANALYSIS]</scope>
</reference>
<dbReference type="EC" id="1.6.5.4" evidence="6"/>
<dbReference type="EMBL" id="AL132969">
    <property type="protein sequence ID" value="CAB86892.1"/>
    <property type="molecule type" value="Genomic_DNA"/>
</dbReference>
<dbReference type="EMBL" id="CP002686">
    <property type="protein sequence ID" value="AEE79003.1"/>
    <property type="molecule type" value="Genomic_DNA"/>
</dbReference>
<dbReference type="EMBL" id="AF360197">
    <property type="protein sequence ID" value="AAK25907.1"/>
    <property type="molecule type" value="mRNA"/>
</dbReference>
<dbReference type="EMBL" id="AY057576">
    <property type="protein sequence ID" value="AAL09815.1"/>
    <property type="molecule type" value="mRNA"/>
</dbReference>
<dbReference type="EMBL" id="AY045666">
    <property type="protein sequence ID" value="AAK74024.1"/>
    <property type="molecule type" value="mRNA"/>
</dbReference>
<dbReference type="EMBL" id="AY070718">
    <property type="protein sequence ID" value="AAL50062.1"/>
    <property type="molecule type" value="mRNA"/>
</dbReference>
<dbReference type="EMBL" id="AY060525">
    <property type="protein sequence ID" value="AAL31138.1"/>
    <property type="molecule type" value="mRNA"/>
</dbReference>
<dbReference type="EMBL" id="AY091403">
    <property type="protein sequence ID" value="AAM14342.1"/>
    <property type="molecule type" value="mRNA"/>
</dbReference>
<dbReference type="EMBL" id="AY125492">
    <property type="protein sequence ID" value="AAM83213.1"/>
    <property type="molecule type" value="mRNA"/>
</dbReference>
<dbReference type="EMBL" id="AY086968">
    <property type="protein sequence ID" value="AAM64531.1"/>
    <property type="molecule type" value="mRNA"/>
</dbReference>
<dbReference type="EMBL" id="AK227030">
    <property type="protein sequence ID" value="BAE99092.1"/>
    <property type="molecule type" value="mRNA"/>
</dbReference>
<dbReference type="EMBL" id="AK317341">
    <property type="protein sequence ID" value="BAH20014.1"/>
    <property type="molecule type" value="mRNA"/>
</dbReference>
<dbReference type="PIR" id="T47545">
    <property type="entry name" value="T47545"/>
</dbReference>
<dbReference type="RefSeq" id="NP_190856.1">
    <molecule id="Q9LFA3-1"/>
    <property type="nucleotide sequence ID" value="NM_115148.4"/>
</dbReference>
<dbReference type="SMR" id="Q9LFA3"/>
<dbReference type="BioGRID" id="9771">
    <property type="interactions" value="15"/>
</dbReference>
<dbReference type="FunCoup" id="Q9LFA3">
    <property type="interactions" value="2035"/>
</dbReference>
<dbReference type="STRING" id="3702.Q9LFA3"/>
<dbReference type="iPTMnet" id="Q9LFA3"/>
<dbReference type="MetOSite" id="Q9LFA3"/>
<dbReference type="PaxDb" id="3702-AT3G52880.2"/>
<dbReference type="ProteomicsDB" id="250838">
    <molecule id="Q9LFA3-1"/>
</dbReference>
<dbReference type="EnsemblPlants" id="AT3G52880.1">
    <molecule id="Q9LFA3-1"/>
    <property type="protein sequence ID" value="AT3G52880.1"/>
    <property type="gene ID" value="AT3G52880"/>
</dbReference>
<dbReference type="GeneID" id="824454"/>
<dbReference type="Gramene" id="AT3G52880.1">
    <molecule id="Q9LFA3-1"/>
    <property type="protein sequence ID" value="AT3G52880.1"/>
    <property type="gene ID" value="AT3G52880"/>
</dbReference>
<dbReference type="KEGG" id="ath:AT3G52880"/>
<dbReference type="Araport" id="AT3G52880"/>
<dbReference type="TAIR" id="AT3G52880">
    <property type="gene designation" value="MDAR1"/>
</dbReference>
<dbReference type="eggNOG" id="KOG1336">
    <property type="taxonomic scope" value="Eukaryota"/>
</dbReference>
<dbReference type="InParanoid" id="Q9LFA3"/>
<dbReference type="OMA" id="PRCTHYG"/>
<dbReference type="OrthoDB" id="432169at2759"/>
<dbReference type="PhylomeDB" id="Q9LFA3"/>
<dbReference type="BioCyc" id="ARA:AT3G52880-MONOMER"/>
<dbReference type="CD-CODE" id="4299E36E">
    <property type="entry name" value="Nucleolus"/>
</dbReference>
<dbReference type="PRO" id="PR:Q9LFA3"/>
<dbReference type="Proteomes" id="UP000006548">
    <property type="component" value="Chromosome 3"/>
</dbReference>
<dbReference type="ExpressionAtlas" id="Q9LFA3">
    <property type="expression patterns" value="baseline and differential"/>
</dbReference>
<dbReference type="GO" id="GO:0005782">
    <property type="term" value="C:peroxisomal matrix"/>
    <property type="evidence" value="ECO:0007669"/>
    <property type="project" value="UniProtKB-SubCell"/>
</dbReference>
<dbReference type="GO" id="GO:0016656">
    <property type="term" value="F:monodehydroascorbate reductase (NADH) activity"/>
    <property type="evidence" value="ECO:0007669"/>
    <property type="project" value="UniProtKB-EC"/>
</dbReference>
<dbReference type="FunFam" id="3.30.390.30:FF:000013">
    <property type="entry name" value="Monodehydroascorbate reductase 3"/>
    <property type="match status" value="1"/>
</dbReference>
<dbReference type="FunFam" id="3.50.50.60:FF:000155">
    <property type="entry name" value="Monodehydroascorbate reductase 3"/>
    <property type="match status" value="1"/>
</dbReference>
<dbReference type="Gene3D" id="3.30.390.30">
    <property type="match status" value="1"/>
</dbReference>
<dbReference type="Gene3D" id="3.50.50.60">
    <property type="entry name" value="FAD/NAD(P)-binding domain"/>
    <property type="match status" value="2"/>
</dbReference>
<dbReference type="InterPro" id="IPR050446">
    <property type="entry name" value="FAD-oxidoreductase/Apoptosis"/>
</dbReference>
<dbReference type="InterPro" id="IPR036188">
    <property type="entry name" value="FAD/NAD-bd_sf"/>
</dbReference>
<dbReference type="InterPro" id="IPR023753">
    <property type="entry name" value="FAD/NAD-binding_dom"/>
</dbReference>
<dbReference type="InterPro" id="IPR016156">
    <property type="entry name" value="FAD/NAD-linked_Rdtase_dimer_sf"/>
</dbReference>
<dbReference type="InterPro" id="IPR048618">
    <property type="entry name" value="MDHAR3-like_C"/>
</dbReference>
<dbReference type="PANTHER" id="PTHR43557">
    <property type="entry name" value="APOPTOSIS-INDUCING FACTOR 1"/>
    <property type="match status" value="1"/>
</dbReference>
<dbReference type="PANTHER" id="PTHR43557:SF5">
    <property type="entry name" value="MONODEHYDROASCORBATE REDUCTASE 1, PEROXISOMAL"/>
    <property type="match status" value="1"/>
</dbReference>
<dbReference type="Pfam" id="PF21791">
    <property type="entry name" value="MDHAR3-like_C"/>
    <property type="match status" value="1"/>
</dbReference>
<dbReference type="Pfam" id="PF07992">
    <property type="entry name" value="Pyr_redox_2"/>
    <property type="match status" value="1"/>
</dbReference>
<dbReference type="PRINTS" id="PR00368">
    <property type="entry name" value="FADPNR"/>
</dbReference>
<dbReference type="PRINTS" id="PR00411">
    <property type="entry name" value="PNDRDTASEI"/>
</dbReference>
<dbReference type="SUPFAM" id="SSF51905">
    <property type="entry name" value="FAD/NAD(P)-binding domain"/>
    <property type="match status" value="1"/>
</dbReference>
<dbReference type="SUPFAM" id="SSF55424">
    <property type="entry name" value="FAD/NAD-linked reductases, dimerisation (C-terminal) domain"/>
    <property type="match status" value="1"/>
</dbReference>
<sequence length="434" mass="46487">MAEKSFKYIILGGGVSAGYAAKEFANQGVQPGELAVISKEAVAPYERPALSKGYLFPEGAARLPGFHCCVGSGGEKLLPESYKQKGIELILSTEIVKADLSAKSLVSATGDVFKYQTLIIATGSTVLRLTDFGVKGADSKNILYLREIDDADKLVEAIKAKKGGKAVVVGGGYIGLELSAVLRINNLDVTMVFPEPWCMPRLFTADIAAFYETYYTNKGVKIIKGTVASGFTAQPNGEVKEVQLKDGRTLEADIVIVGVGAKPLTSLFKGQVEEDKGGIKTDAFFKTSVPDVYAVGDVATFPLKMYGDVRRVEHVDHSRKSAEQAVKAIKAAEGGAAVEEYDYLPFFYSRSFDLSWQFYGDNVGDSVLFGDSNPSNPKPRFGAYWVQGGKVVGAFMEGGSGDENKALAKVAKARPSAESLDELVKQGISFAAKI</sequence>
<gene>
    <name evidence="5" type="primary">MDAR1</name>
    <name evidence="7" type="ordered locus">At3g52880</name>
    <name evidence="8" type="ORF">F8J2.50</name>
</gene>
<comment type="function">
    <text evidence="3">Catalyzes the conversion of monodehydroascorbate to ascorbate, oxidizing NADH in the process.</text>
</comment>
<comment type="catalytic activity">
    <reaction evidence="6">
        <text>2 monodehydro-L-ascorbate radical + NADH + H(+) = 2 L-ascorbate + NAD(+)</text>
        <dbReference type="Rhea" id="RHEA:14581"/>
        <dbReference type="ChEBI" id="CHEBI:15378"/>
        <dbReference type="ChEBI" id="CHEBI:38290"/>
        <dbReference type="ChEBI" id="CHEBI:57540"/>
        <dbReference type="ChEBI" id="CHEBI:57945"/>
        <dbReference type="ChEBI" id="CHEBI:59513"/>
        <dbReference type="EC" id="1.6.5.4"/>
    </reaction>
</comment>
<comment type="cofactor">
    <cofactor evidence="2">
        <name>FAD</name>
        <dbReference type="ChEBI" id="CHEBI:57692"/>
    </cofactor>
</comment>
<comment type="subcellular location">
    <subcellularLocation>
        <location evidence="3">Peroxisome matrix</location>
    </subcellularLocation>
</comment>
<comment type="alternative products">
    <event type="alternative splicing"/>
    <isoform>
        <id>Q9LFA3-1</id>
        <name>1</name>
        <sequence type="displayed"/>
    </isoform>
    <text>A number of isoforms are produced. According to EST sequences.</text>
</comment>
<comment type="induction">
    <text evidence="4">Induced by cadmium.</text>
</comment>
<comment type="similarity">
    <text evidence="6">Belongs to the FAD-dependent oxidoreductase family.</text>
</comment>
<name>MDAR1_ARATH</name>